<name>Y1215_RICBR</name>
<organism>
    <name type="scientific">Rickettsia bellii (strain RML369-C)</name>
    <dbReference type="NCBI Taxonomy" id="336407"/>
    <lineage>
        <taxon>Bacteria</taxon>
        <taxon>Pseudomonadati</taxon>
        <taxon>Pseudomonadota</taxon>
        <taxon>Alphaproteobacteria</taxon>
        <taxon>Rickettsiales</taxon>
        <taxon>Rickettsiaceae</taxon>
        <taxon>Rickettsieae</taxon>
        <taxon>Rickettsia</taxon>
        <taxon>belli group</taxon>
    </lineage>
</organism>
<keyword id="KW-0040">ANK repeat</keyword>
<keyword id="KW-0677">Repeat</keyword>
<sequence length="120" mass="13946">MINLLRLVVYEKGIPLTYEEWDGGNALHVACGAGGSLKMVKFLVENNILTNIHKKSEKFGDTPLTLAISYDHHDIVDYFKQKFNITSVTLKDLDVIIDRVKANYRRYYNIKKYYENQSKK</sequence>
<protein>
    <recommendedName>
        <fullName>Putative ankyrin repeat protein RBE_1215</fullName>
    </recommendedName>
</protein>
<feature type="chain" id="PRO_0000280924" description="Putative ankyrin repeat protein RBE_1215">
    <location>
        <begin position="1"/>
        <end position="120"/>
    </location>
</feature>
<feature type="repeat" description="ANK 1">
    <location>
        <begin position="22"/>
        <end position="52"/>
    </location>
</feature>
<feature type="repeat" description="ANK 2">
    <location>
        <begin position="59"/>
        <end position="88"/>
    </location>
</feature>
<accession>Q1RH68</accession>
<dbReference type="EMBL" id="CP000087">
    <property type="protein sequence ID" value="ABE05296.1"/>
    <property type="molecule type" value="Genomic_DNA"/>
</dbReference>
<dbReference type="SMR" id="Q1RH68"/>
<dbReference type="KEGG" id="rbe:RBE_1215"/>
<dbReference type="HOGENOM" id="CLU_2047934_0_0_5"/>
<dbReference type="Proteomes" id="UP000001951">
    <property type="component" value="Chromosome"/>
</dbReference>
<dbReference type="Gene3D" id="1.25.40.20">
    <property type="entry name" value="Ankyrin repeat-containing domain"/>
    <property type="match status" value="1"/>
</dbReference>
<dbReference type="InterPro" id="IPR002110">
    <property type="entry name" value="Ankyrin_rpt"/>
</dbReference>
<dbReference type="InterPro" id="IPR036770">
    <property type="entry name" value="Ankyrin_rpt-contain_sf"/>
</dbReference>
<dbReference type="Pfam" id="PF12796">
    <property type="entry name" value="Ank_2"/>
    <property type="match status" value="1"/>
</dbReference>
<dbReference type="SMART" id="SM00248">
    <property type="entry name" value="ANK"/>
    <property type="match status" value="2"/>
</dbReference>
<dbReference type="SUPFAM" id="SSF48403">
    <property type="entry name" value="Ankyrin repeat"/>
    <property type="match status" value="1"/>
</dbReference>
<dbReference type="PROSITE" id="PS50297">
    <property type="entry name" value="ANK_REP_REGION"/>
    <property type="match status" value="1"/>
</dbReference>
<proteinExistence type="predicted"/>
<reference key="1">
    <citation type="journal article" date="2006" name="PLoS Genet.">
        <title>Genome sequence of Rickettsia bellii illuminates the role of amoebae in gene exchanges between intracellular pathogens.</title>
        <authorList>
            <person name="Ogata H."/>
            <person name="La Scola B."/>
            <person name="Audic S."/>
            <person name="Renesto P."/>
            <person name="Blanc G."/>
            <person name="Robert C."/>
            <person name="Fournier P.-E."/>
            <person name="Claverie J.-M."/>
            <person name="Raoult D."/>
        </authorList>
    </citation>
    <scope>NUCLEOTIDE SEQUENCE [LARGE SCALE GENOMIC DNA]</scope>
    <source>
        <strain>RML369-C</strain>
    </source>
</reference>
<gene>
    <name type="ordered locus">RBE_1215</name>
</gene>